<feature type="chain" id="PRO_0000105037" description="Integration host factor subunit alpha">
    <location>
        <begin position="1"/>
        <end position="98"/>
    </location>
</feature>
<feature type="region of interest" description="Disordered" evidence="2">
    <location>
        <begin position="49"/>
        <end position="70"/>
    </location>
</feature>
<accession>Q8ZDX2</accession>
<accession>Q0WE98</accession>
<proteinExistence type="inferred from homology"/>
<evidence type="ECO:0000255" key="1">
    <source>
        <dbReference type="HAMAP-Rule" id="MF_00380"/>
    </source>
</evidence>
<evidence type="ECO:0000256" key="2">
    <source>
        <dbReference type="SAM" id="MobiDB-lite"/>
    </source>
</evidence>
<protein>
    <recommendedName>
        <fullName evidence="1">Integration host factor subunit alpha</fullName>
        <shortName evidence="1">IHF-alpha</shortName>
    </recommendedName>
</protein>
<keyword id="KW-0233">DNA recombination</keyword>
<keyword id="KW-0238">DNA-binding</keyword>
<keyword id="KW-1185">Reference proteome</keyword>
<keyword id="KW-0804">Transcription</keyword>
<keyword id="KW-0805">Transcription regulation</keyword>
<keyword id="KW-0810">Translation regulation</keyword>
<dbReference type="EMBL" id="AL590842">
    <property type="protein sequence ID" value="CAL21054.1"/>
    <property type="molecule type" value="Genomic_DNA"/>
</dbReference>
<dbReference type="EMBL" id="AE009952">
    <property type="protein sequence ID" value="AAM85478.1"/>
    <property type="molecule type" value="Genomic_DNA"/>
</dbReference>
<dbReference type="EMBL" id="AE017042">
    <property type="protein sequence ID" value="AAS62420.1"/>
    <property type="molecule type" value="Genomic_DNA"/>
</dbReference>
<dbReference type="PIR" id="AC0296">
    <property type="entry name" value="AC0296"/>
</dbReference>
<dbReference type="RefSeq" id="WP_002211830.1">
    <property type="nucleotide sequence ID" value="NZ_WHLN01000031.1"/>
</dbReference>
<dbReference type="RefSeq" id="YP_002347390.1">
    <property type="nucleotide sequence ID" value="NC_003143.1"/>
</dbReference>
<dbReference type="SMR" id="Q8ZDX2"/>
<dbReference type="STRING" id="214092.YPO2427"/>
<dbReference type="PaxDb" id="214092-YPO2427"/>
<dbReference type="DNASU" id="1146858"/>
<dbReference type="EnsemblBacteria" id="AAS62420">
    <property type="protein sequence ID" value="AAS62420"/>
    <property type="gene ID" value="YP_2214"/>
</dbReference>
<dbReference type="GeneID" id="97456078"/>
<dbReference type="KEGG" id="ype:YPO2427"/>
<dbReference type="KEGG" id="ypk:y1910"/>
<dbReference type="KEGG" id="ypm:YP_2214"/>
<dbReference type="PATRIC" id="fig|1028802.3.peg.932"/>
<dbReference type="eggNOG" id="COG0776">
    <property type="taxonomic scope" value="Bacteria"/>
</dbReference>
<dbReference type="HOGENOM" id="CLU_105066_1_3_6"/>
<dbReference type="OMA" id="EMLFDQV"/>
<dbReference type="OrthoDB" id="9797747at2"/>
<dbReference type="Proteomes" id="UP000000815">
    <property type="component" value="Chromosome"/>
</dbReference>
<dbReference type="Proteomes" id="UP000001019">
    <property type="component" value="Chromosome"/>
</dbReference>
<dbReference type="Proteomes" id="UP000002490">
    <property type="component" value="Chromosome"/>
</dbReference>
<dbReference type="GO" id="GO:0005829">
    <property type="term" value="C:cytosol"/>
    <property type="evidence" value="ECO:0000318"/>
    <property type="project" value="GO_Central"/>
</dbReference>
<dbReference type="GO" id="GO:0003677">
    <property type="term" value="F:DNA binding"/>
    <property type="evidence" value="ECO:0000318"/>
    <property type="project" value="GO_Central"/>
</dbReference>
<dbReference type="GO" id="GO:0030527">
    <property type="term" value="F:structural constituent of chromatin"/>
    <property type="evidence" value="ECO:0007669"/>
    <property type="project" value="InterPro"/>
</dbReference>
<dbReference type="GO" id="GO:0006310">
    <property type="term" value="P:DNA recombination"/>
    <property type="evidence" value="ECO:0007669"/>
    <property type="project" value="UniProtKB-UniRule"/>
</dbReference>
<dbReference type="GO" id="GO:0009893">
    <property type="term" value="P:positive regulation of metabolic process"/>
    <property type="evidence" value="ECO:0007669"/>
    <property type="project" value="UniProtKB-ARBA"/>
</dbReference>
<dbReference type="GO" id="GO:0006355">
    <property type="term" value="P:regulation of DNA-templated transcription"/>
    <property type="evidence" value="ECO:0007669"/>
    <property type="project" value="UniProtKB-UniRule"/>
</dbReference>
<dbReference type="GO" id="GO:0006417">
    <property type="term" value="P:regulation of translation"/>
    <property type="evidence" value="ECO:0007669"/>
    <property type="project" value="UniProtKB-UniRule"/>
</dbReference>
<dbReference type="CDD" id="cd13835">
    <property type="entry name" value="IHF_A"/>
    <property type="match status" value="1"/>
</dbReference>
<dbReference type="FunFam" id="4.10.520.10:FF:000002">
    <property type="entry name" value="Integration host factor subunit alpha"/>
    <property type="match status" value="1"/>
</dbReference>
<dbReference type="Gene3D" id="4.10.520.10">
    <property type="entry name" value="IHF-like DNA-binding proteins"/>
    <property type="match status" value="1"/>
</dbReference>
<dbReference type="HAMAP" id="MF_00380">
    <property type="entry name" value="IHF_alpha"/>
    <property type="match status" value="1"/>
</dbReference>
<dbReference type="InterPro" id="IPR000119">
    <property type="entry name" value="Hist_DNA-bd"/>
</dbReference>
<dbReference type="InterPro" id="IPR020816">
    <property type="entry name" value="Histone-like_DNA-bd_CS"/>
</dbReference>
<dbReference type="InterPro" id="IPR010992">
    <property type="entry name" value="IHF-like_DNA-bd_dom_sf"/>
</dbReference>
<dbReference type="InterPro" id="IPR005684">
    <property type="entry name" value="IHF_alpha"/>
</dbReference>
<dbReference type="NCBIfam" id="TIGR00987">
    <property type="entry name" value="himA"/>
    <property type="match status" value="1"/>
</dbReference>
<dbReference type="NCBIfam" id="NF001401">
    <property type="entry name" value="PRK00285.1"/>
    <property type="match status" value="1"/>
</dbReference>
<dbReference type="PANTHER" id="PTHR33175">
    <property type="entry name" value="DNA-BINDING PROTEIN HU"/>
    <property type="match status" value="1"/>
</dbReference>
<dbReference type="PANTHER" id="PTHR33175:SF2">
    <property type="entry name" value="INTEGRATION HOST FACTOR SUBUNIT ALPHA"/>
    <property type="match status" value="1"/>
</dbReference>
<dbReference type="Pfam" id="PF00216">
    <property type="entry name" value="Bac_DNA_binding"/>
    <property type="match status" value="1"/>
</dbReference>
<dbReference type="PRINTS" id="PR01727">
    <property type="entry name" value="DNABINDINGHU"/>
</dbReference>
<dbReference type="SMART" id="SM00411">
    <property type="entry name" value="BHL"/>
    <property type="match status" value="1"/>
</dbReference>
<dbReference type="SUPFAM" id="SSF47729">
    <property type="entry name" value="IHF-like DNA-binding proteins"/>
    <property type="match status" value="1"/>
</dbReference>
<dbReference type="PROSITE" id="PS00045">
    <property type="entry name" value="HISTONE_LIKE"/>
    <property type="match status" value="1"/>
</dbReference>
<reference key="1">
    <citation type="journal article" date="2001" name="Nature">
        <title>Genome sequence of Yersinia pestis, the causative agent of plague.</title>
        <authorList>
            <person name="Parkhill J."/>
            <person name="Wren B.W."/>
            <person name="Thomson N.R."/>
            <person name="Titball R.W."/>
            <person name="Holden M.T.G."/>
            <person name="Prentice M.B."/>
            <person name="Sebaihia M."/>
            <person name="James K.D."/>
            <person name="Churcher C.M."/>
            <person name="Mungall K.L."/>
            <person name="Baker S."/>
            <person name="Basham D."/>
            <person name="Bentley S.D."/>
            <person name="Brooks K."/>
            <person name="Cerdeno-Tarraga A.-M."/>
            <person name="Chillingworth T."/>
            <person name="Cronin A."/>
            <person name="Davies R.M."/>
            <person name="Davis P."/>
            <person name="Dougan G."/>
            <person name="Feltwell T."/>
            <person name="Hamlin N."/>
            <person name="Holroyd S."/>
            <person name="Jagels K."/>
            <person name="Karlyshev A.V."/>
            <person name="Leather S."/>
            <person name="Moule S."/>
            <person name="Oyston P.C.F."/>
            <person name="Quail M.A."/>
            <person name="Rutherford K.M."/>
            <person name="Simmonds M."/>
            <person name="Skelton J."/>
            <person name="Stevens K."/>
            <person name="Whitehead S."/>
            <person name="Barrell B.G."/>
        </authorList>
    </citation>
    <scope>NUCLEOTIDE SEQUENCE [LARGE SCALE GENOMIC DNA]</scope>
    <source>
        <strain>CO-92 / Biovar Orientalis</strain>
    </source>
</reference>
<reference key="2">
    <citation type="journal article" date="2002" name="J. Bacteriol.">
        <title>Genome sequence of Yersinia pestis KIM.</title>
        <authorList>
            <person name="Deng W."/>
            <person name="Burland V."/>
            <person name="Plunkett G. III"/>
            <person name="Boutin A."/>
            <person name="Mayhew G.F."/>
            <person name="Liss P."/>
            <person name="Perna N.T."/>
            <person name="Rose D.J."/>
            <person name="Mau B."/>
            <person name="Zhou S."/>
            <person name="Schwartz D.C."/>
            <person name="Fetherston J.D."/>
            <person name="Lindler L.E."/>
            <person name="Brubaker R.R."/>
            <person name="Plano G.V."/>
            <person name="Straley S.C."/>
            <person name="McDonough K.A."/>
            <person name="Nilles M.L."/>
            <person name="Matson J.S."/>
            <person name="Blattner F.R."/>
            <person name="Perry R.D."/>
        </authorList>
    </citation>
    <scope>NUCLEOTIDE SEQUENCE [LARGE SCALE GENOMIC DNA]</scope>
    <source>
        <strain>KIM10+ / Biovar Mediaevalis</strain>
    </source>
</reference>
<reference key="3">
    <citation type="journal article" date="2004" name="DNA Res.">
        <title>Complete genome sequence of Yersinia pestis strain 91001, an isolate avirulent to humans.</title>
        <authorList>
            <person name="Song Y."/>
            <person name="Tong Z."/>
            <person name="Wang J."/>
            <person name="Wang L."/>
            <person name="Guo Z."/>
            <person name="Han Y."/>
            <person name="Zhang J."/>
            <person name="Pei D."/>
            <person name="Zhou D."/>
            <person name="Qin H."/>
            <person name="Pang X."/>
            <person name="Han Y."/>
            <person name="Zhai J."/>
            <person name="Li M."/>
            <person name="Cui B."/>
            <person name="Qi Z."/>
            <person name="Jin L."/>
            <person name="Dai R."/>
            <person name="Chen F."/>
            <person name="Li S."/>
            <person name="Ye C."/>
            <person name="Du Z."/>
            <person name="Lin W."/>
            <person name="Wang J."/>
            <person name="Yu J."/>
            <person name="Yang H."/>
            <person name="Wang J."/>
            <person name="Huang P."/>
            <person name="Yang R."/>
        </authorList>
    </citation>
    <scope>NUCLEOTIDE SEQUENCE [LARGE SCALE GENOMIC DNA]</scope>
    <source>
        <strain>91001 / Biovar Mediaevalis</strain>
    </source>
</reference>
<organism>
    <name type="scientific">Yersinia pestis</name>
    <dbReference type="NCBI Taxonomy" id="632"/>
    <lineage>
        <taxon>Bacteria</taxon>
        <taxon>Pseudomonadati</taxon>
        <taxon>Pseudomonadota</taxon>
        <taxon>Gammaproteobacteria</taxon>
        <taxon>Enterobacterales</taxon>
        <taxon>Yersiniaceae</taxon>
        <taxon>Yersinia</taxon>
    </lineage>
</organism>
<comment type="function">
    <text evidence="1">This protein is one of the two subunits of integration host factor, a specific DNA-binding protein that functions in genetic recombination as well as in transcriptional and translational control.</text>
</comment>
<comment type="subunit">
    <text evidence="1">Heterodimer of an alpha and a beta chain.</text>
</comment>
<comment type="similarity">
    <text evidence="1">Belongs to the bacterial histone-like protein family.</text>
</comment>
<name>IHFA_YERPE</name>
<sequence length="98" mass="11186">MALTKAEMSEHLFEKLGLSKRDAKDLVELFFEEVRRALENGEQVKLSGFGNFDLRDKNQRPGRNPKTGEDIPITARRVVTFRPGQKLKSRVESATPKE</sequence>
<gene>
    <name evidence="1" type="primary">ihfA</name>
    <name evidence="1" type="synonym">himA</name>
    <name type="ordered locus">YPO2427</name>
    <name type="ordered locus">y1910</name>
    <name type="ordered locus">YP_2214</name>
</gene>